<dbReference type="EMBL" id="AAFI02000171">
    <property type="protein sequence ID" value="EAL62002.2"/>
    <property type="molecule type" value="Genomic_DNA"/>
</dbReference>
<dbReference type="RefSeq" id="XP_635507.2">
    <property type="nucleotide sequence ID" value="XM_630415.2"/>
</dbReference>
<dbReference type="SMR" id="Q54FG4"/>
<dbReference type="STRING" id="44689.Q54FG4"/>
<dbReference type="PaxDb" id="44689-DDB0230029"/>
<dbReference type="EnsemblProtists" id="EAL62002">
    <property type="protein sequence ID" value="EAL62002"/>
    <property type="gene ID" value="DDB_G0290875"/>
</dbReference>
<dbReference type="GeneID" id="8627874"/>
<dbReference type="KEGG" id="ddi:DDB_G0290875"/>
<dbReference type="dictyBase" id="DDB_G0290875">
    <property type="gene designation" value="rabP"/>
</dbReference>
<dbReference type="VEuPathDB" id="AmoebaDB:DDB_G0290875"/>
<dbReference type="eggNOG" id="KOG0394">
    <property type="taxonomic scope" value="Eukaryota"/>
</dbReference>
<dbReference type="HOGENOM" id="CLU_041217_10_6_1"/>
<dbReference type="InParanoid" id="Q54FG4"/>
<dbReference type="PhylomeDB" id="Q54FG4"/>
<dbReference type="PRO" id="PR:Q54FG4"/>
<dbReference type="Proteomes" id="UP000002195">
    <property type="component" value="Chromosome 5"/>
</dbReference>
<dbReference type="GO" id="GO:0012505">
    <property type="term" value="C:endomembrane system"/>
    <property type="evidence" value="ECO:0000318"/>
    <property type="project" value="GO_Central"/>
</dbReference>
<dbReference type="GO" id="GO:0005886">
    <property type="term" value="C:plasma membrane"/>
    <property type="evidence" value="ECO:0007669"/>
    <property type="project" value="UniProtKB-SubCell"/>
</dbReference>
<dbReference type="GO" id="GO:0005525">
    <property type="term" value="F:GTP binding"/>
    <property type="evidence" value="ECO:0007669"/>
    <property type="project" value="UniProtKB-KW"/>
</dbReference>
<dbReference type="GO" id="GO:0003924">
    <property type="term" value="F:GTPase activity"/>
    <property type="evidence" value="ECO:0000318"/>
    <property type="project" value="GO_Central"/>
</dbReference>
<dbReference type="GO" id="GO:0006897">
    <property type="term" value="P:endocytosis"/>
    <property type="evidence" value="ECO:0000318"/>
    <property type="project" value="GO_Central"/>
</dbReference>
<dbReference type="GO" id="GO:0006886">
    <property type="term" value="P:intracellular protein transport"/>
    <property type="evidence" value="ECO:0000318"/>
    <property type="project" value="GO_Central"/>
</dbReference>
<dbReference type="CDD" id="cd00154">
    <property type="entry name" value="Rab"/>
    <property type="match status" value="1"/>
</dbReference>
<dbReference type="FunFam" id="3.40.50.300:FF:003006">
    <property type="entry name" value="Rab family gtpase"/>
    <property type="match status" value="1"/>
</dbReference>
<dbReference type="Gene3D" id="3.40.50.300">
    <property type="entry name" value="P-loop containing nucleotide triphosphate hydrolases"/>
    <property type="match status" value="1"/>
</dbReference>
<dbReference type="InterPro" id="IPR027417">
    <property type="entry name" value="P-loop_NTPase"/>
</dbReference>
<dbReference type="InterPro" id="IPR005225">
    <property type="entry name" value="Small_GTP-bd"/>
</dbReference>
<dbReference type="InterPro" id="IPR001806">
    <property type="entry name" value="Small_GTPase"/>
</dbReference>
<dbReference type="NCBIfam" id="TIGR00231">
    <property type="entry name" value="small_GTP"/>
    <property type="match status" value="1"/>
</dbReference>
<dbReference type="PANTHER" id="PTHR47981">
    <property type="entry name" value="RAB FAMILY"/>
    <property type="match status" value="1"/>
</dbReference>
<dbReference type="PANTHER" id="PTHR47981:SF20">
    <property type="entry name" value="RAS-RELATED PROTEIN RAB-7A"/>
    <property type="match status" value="1"/>
</dbReference>
<dbReference type="Pfam" id="PF00071">
    <property type="entry name" value="Ras"/>
    <property type="match status" value="1"/>
</dbReference>
<dbReference type="PRINTS" id="PR00449">
    <property type="entry name" value="RASTRNSFRMNG"/>
</dbReference>
<dbReference type="SMART" id="SM00175">
    <property type="entry name" value="RAB"/>
    <property type="match status" value="1"/>
</dbReference>
<dbReference type="SMART" id="SM00173">
    <property type="entry name" value="RAS"/>
    <property type="match status" value="1"/>
</dbReference>
<dbReference type="SMART" id="SM00174">
    <property type="entry name" value="RHO"/>
    <property type="match status" value="1"/>
</dbReference>
<dbReference type="SUPFAM" id="SSF52540">
    <property type="entry name" value="P-loop containing nucleoside triphosphate hydrolases"/>
    <property type="match status" value="1"/>
</dbReference>
<dbReference type="PROSITE" id="PS51419">
    <property type="entry name" value="RAB"/>
    <property type="match status" value="1"/>
</dbReference>
<accession>Q54FG4</accession>
<keyword id="KW-1003">Cell membrane</keyword>
<keyword id="KW-0342">GTP-binding</keyword>
<keyword id="KW-0449">Lipoprotein</keyword>
<keyword id="KW-0472">Membrane</keyword>
<keyword id="KW-0547">Nucleotide-binding</keyword>
<keyword id="KW-0636">Prenylation</keyword>
<keyword id="KW-1185">Reference proteome</keyword>
<gene>
    <name type="primary">rabP</name>
    <name type="ORF">DDB_G0290875</name>
</gene>
<reference key="1">
    <citation type="journal article" date="2005" name="Nature">
        <title>The genome of the social amoeba Dictyostelium discoideum.</title>
        <authorList>
            <person name="Eichinger L."/>
            <person name="Pachebat J.A."/>
            <person name="Gloeckner G."/>
            <person name="Rajandream M.A."/>
            <person name="Sucgang R."/>
            <person name="Berriman M."/>
            <person name="Song J."/>
            <person name="Olsen R."/>
            <person name="Szafranski K."/>
            <person name="Xu Q."/>
            <person name="Tunggal B."/>
            <person name="Kummerfeld S."/>
            <person name="Madera M."/>
            <person name="Konfortov B.A."/>
            <person name="Rivero F."/>
            <person name="Bankier A.T."/>
            <person name="Lehmann R."/>
            <person name="Hamlin N."/>
            <person name="Davies R."/>
            <person name="Gaudet P."/>
            <person name="Fey P."/>
            <person name="Pilcher K."/>
            <person name="Chen G."/>
            <person name="Saunders D."/>
            <person name="Sodergren E.J."/>
            <person name="Davis P."/>
            <person name="Kerhornou A."/>
            <person name="Nie X."/>
            <person name="Hall N."/>
            <person name="Anjard C."/>
            <person name="Hemphill L."/>
            <person name="Bason N."/>
            <person name="Farbrother P."/>
            <person name="Desany B."/>
            <person name="Just E."/>
            <person name="Morio T."/>
            <person name="Rost R."/>
            <person name="Churcher C.M."/>
            <person name="Cooper J."/>
            <person name="Haydock S."/>
            <person name="van Driessche N."/>
            <person name="Cronin A."/>
            <person name="Goodhead I."/>
            <person name="Muzny D.M."/>
            <person name="Mourier T."/>
            <person name="Pain A."/>
            <person name="Lu M."/>
            <person name="Harper D."/>
            <person name="Lindsay R."/>
            <person name="Hauser H."/>
            <person name="James K.D."/>
            <person name="Quiles M."/>
            <person name="Madan Babu M."/>
            <person name="Saito T."/>
            <person name="Buchrieser C."/>
            <person name="Wardroper A."/>
            <person name="Felder M."/>
            <person name="Thangavelu M."/>
            <person name="Johnson D."/>
            <person name="Knights A."/>
            <person name="Loulseged H."/>
            <person name="Mungall K.L."/>
            <person name="Oliver K."/>
            <person name="Price C."/>
            <person name="Quail M.A."/>
            <person name="Urushihara H."/>
            <person name="Hernandez J."/>
            <person name="Rabbinowitsch E."/>
            <person name="Steffen D."/>
            <person name="Sanders M."/>
            <person name="Ma J."/>
            <person name="Kohara Y."/>
            <person name="Sharp S."/>
            <person name="Simmonds M.N."/>
            <person name="Spiegler S."/>
            <person name="Tivey A."/>
            <person name="Sugano S."/>
            <person name="White B."/>
            <person name="Walker D."/>
            <person name="Woodward J.R."/>
            <person name="Winckler T."/>
            <person name="Tanaka Y."/>
            <person name="Shaulsky G."/>
            <person name="Schleicher M."/>
            <person name="Weinstock G.M."/>
            <person name="Rosenthal A."/>
            <person name="Cox E.C."/>
            <person name="Chisholm R.L."/>
            <person name="Gibbs R.A."/>
            <person name="Loomis W.F."/>
            <person name="Platzer M."/>
            <person name="Kay R.R."/>
            <person name="Williams J.G."/>
            <person name="Dear P.H."/>
            <person name="Noegel A.A."/>
            <person name="Barrell B.G."/>
            <person name="Kuspa A."/>
        </authorList>
    </citation>
    <scope>NUCLEOTIDE SEQUENCE [LARGE SCALE GENOMIC DNA]</scope>
    <source>
        <strain>AX4</strain>
    </source>
</reference>
<protein>
    <recommendedName>
        <fullName>Ras-related protein RabP</fullName>
    </recommendedName>
</protein>
<sequence>MNPNKIIDLKIITVGNYGVGKSSILKRFHQVDLDDNTTGFKTKKFIIDNHHVSVQTWDTSGQERFCSLSSSFYRNCDGVILCFSVDNEDSFKALDLWRDELIKFGYFPDRVPFILVGNKFDLEFKKHVINSKMAQDWCKYQKLKYQVGVNKELPDIIYHETSIEKLVSIDEAFINICRQAFENKIKISLSKLNNNNNNNEENNNNNNNNENNNYNNVPIFQIGQKIRSCCYY</sequence>
<feature type="chain" id="PRO_0000332765" description="Ras-related protein RabP">
    <location>
        <begin position="1"/>
        <end position="232"/>
    </location>
</feature>
<feature type="short sequence motif" description="Effector region" evidence="1">
    <location>
        <begin position="35"/>
        <end position="40"/>
    </location>
</feature>
<feature type="binding site" evidence="1">
    <location>
        <begin position="15"/>
        <end position="22"/>
    </location>
    <ligand>
        <name>GTP</name>
        <dbReference type="ChEBI" id="CHEBI:37565"/>
    </ligand>
</feature>
<feature type="binding site" evidence="1">
    <location>
        <begin position="58"/>
        <end position="62"/>
    </location>
    <ligand>
        <name>GTP</name>
        <dbReference type="ChEBI" id="CHEBI:37565"/>
    </ligand>
</feature>
<feature type="binding site" evidence="1">
    <location>
        <begin position="118"/>
        <end position="121"/>
    </location>
    <ligand>
        <name>GTP</name>
        <dbReference type="ChEBI" id="CHEBI:37565"/>
    </ligand>
</feature>
<feature type="lipid moiety-binding region" description="S-geranylgeranyl cysteine" evidence="1">
    <location>
        <position position="229"/>
    </location>
</feature>
<feature type="lipid moiety-binding region" description="S-geranylgeranyl cysteine" evidence="1">
    <location>
        <position position="230"/>
    </location>
</feature>
<organism>
    <name type="scientific">Dictyostelium discoideum</name>
    <name type="common">Social amoeba</name>
    <dbReference type="NCBI Taxonomy" id="44689"/>
    <lineage>
        <taxon>Eukaryota</taxon>
        <taxon>Amoebozoa</taxon>
        <taxon>Evosea</taxon>
        <taxon>Eumycetozoa</taxon>
        <taxon>Dictyostelia</taxon>
        <taxon>Dictyosteliales</taxon>
        <taxon>Dictyosteliaceae</taxon>
        <taxon>Dictyostelium</taxon>
    </lineage>
</organism>
<comment type="subcellular location">
    <subcellularLocation>
        <location evidence="2">Cell membrane</location>
        <topology evidence="2">Lipid-anchor</topology>
        <orientation evidence="2">Cytoplasmic side</orientation>
    </subcellularLocation>
</comment>
<comment type="similarity">
    <text evidence="2">Belongs to the small GTPase superfamily. Rab family.</text>
</comment>
<evidence type="ECO:0000250" key="1"/>
<evidence type="ECO:0000305" key="2"/>
<name>RABP_DICDI</name>
<proteinExistence type="inferred from homology"/>